<gene>
    <name evidence="1" type="primary">ctaB</name>
    <name type="ordered locus">Wbm0306</name>
</gene>
<dbReference type="EC" id="2.5.1.141" evidence="1"/>
<dbReference type="EMBL" id="AE017321">
    <property type="protein sequence ID" value="AAW70895.1"/>
    <property type="molecule type" value="Genomic_DNA"/>
</dbReference>
<dbReference type="RefSeq" id="WP_011256505.1">
    <property type="nucleotide sequence ID" value="NC_006833.1"/>
</dbReference>
<dbReference type="SMR" id="Q5GSX9"/>
<dbReference type="STRING" id="292805.Wbm0306"/>
<dbReference type="KEGG" id="wbm:Wbm0306"/>
<dbReference type="eggNOG" id="COG0109">
    <property type="taxonomic scope" value="Bacteria"/>
</dbReference>
<dbReference type="HOGENOM" id="CLU_029631_0_2_5"/>
<dbReference type="UniPathway" id="UPA00834">
    <property type="reaction ID" value="UER00712"/>
</dbReference>
<dbReference type="Proteomes" id="UP000000534">
    <property type="component" value="Chromosome"/>
</dbReference>
<dbReference type="GO" id="GO:0005886">
    <property type="term" value="C:plasma membrane"/>
    <property type="evidence" value="ECO:0007669"/>
    <property type="project" value="UniProtKB-SubCell"/>
</dbReference>
<dbReference type="GO" id="GO:0008495">
    <property type="term" value="F:protoheme IX farnesyltransferase activity"/>
    <property type="evidence" value="ECO:0007669"/>
    <property type="project" value="UniProtKB-UniRule"/>
</dbReference>
<dbReference type="GO" id="GO:0048034">
    <property type="term" value="P:heme O biosynthetic process"/>
    <property type="evidence" value="ECO:0007669"/>
    <property type="project" value="UniProtKB-UniRule"/>
</dbReference>
<dbReference type="CDD" id="cd13957">
    <property type="entry name" value="PT_UbiA_Cox10"/>
    <property type="match status" value="1"/>
</dbReference>
<dbReference type="Gene3D" id="1.10.357.140">
    <property type="entry name" value="UbiA prenyltransferase"/>
    <property type="match status" value="1"/>
</dbReference>
<dbReference type="HAMAP" id="MF_00154">
    <property type="entry name" value="CyoE_CtaB"/>
    <property type="match status" value="1"/>
</dbReference>
<dbReference type="InterPro" id="IPR006369">
    <property type="entry name" value="Protohaem_IX_farnesylTrfase"/>
</dbReference>
<dbReference type="InterPro" id="IPR000537">
    <property type="entry name" value="UbiA_prenyltransferase"/>
</dbReference>
<dbReference type="InterPro" id="IPR030470">
    <property type="entry name" value="UbiA_prenylTrfase_CS"/>
</dbReference>
<dbReference type="InterPro" id="IPR044878">
    <property type="entry name" value="UbiA_sf"/>
</dbReference>
<dbReference type="NCBIfam" id="TIGR01473">
    <property type="entry name" value="cyoE_ctaB"/>
    <property type="match status" value="1"/>
</dbReference>
<dbReference type="NCBIfam" id="NF003349">
    <property type="entry name" value="PRK04375.1-2"/>
    <property type="match status" value="1"/>
</dbReference>
<dbReference type="PANTHER" id="PTHR43448:SF7">
    <property type="entry name" value="4-HYDROXYBENZOATE SOLANESYLTRANSFERASE"/>
    <property type="match status" value="1"/>
</dbReference>
<dbReference type="PANTHER" id="PTHR43448">
    <property type="entry name" value="PROTOHEME IX FARNESYLTRANSFERASE, MITOCHONDRIAL"/>
    <property type="match status" value="1"/>
</dbReference>
<dbReference type="Pfam" id="PF01040">
    <property type="entry name" value="UbiA"/>
    <property type="match status" value="1"/>
</dbReference>
<dbReference type="PROSITE" id="PS00943">
    <property type="entry name" value="UBIA"/>
    <property type="match status" value="1"/>
</dbReference>
<keyword id="KW-1003">Cell membrane</keyword>
<keyword id="KW-0350">Heme biosynthesis</keyword>
<keyword id="KW-0472">Membrane</keyword>
<keyword id="KW-1185">Reference proteome</keyword>
<keyword id="KW-0808">Transferase</keyword>
<keyword id="KW-0812">Transmembrane</keyword>
<keyword id="KW-1133">Transmembrane helix</keyword>
<name>COXX_WOLTR</name>
<sequence length="295" mass="32990">MHANTLLNVESTVLDFWRLLKPRIMYLVVFTAVAGMVAAPGSIHPFLALISLICIALGSGSAGAINMWYDRDIDLLMKRTKARPIPSGRVSAESALEFGVTIGVLSVFIMAIAVNYISAILLAIGILFYIFIYTIWLKRRTPQNIVIGGASGAFPPVIGWAVVTDSVSWRGFVLFLIIFMWTPPHFWALSLNKSEDYEKASVPMFNVVYGPEKTRKYILVYSVLLVLTSLLPALFLKRAPFYLGMAIFGGCIFIWHAVSIMKLKDHSSQKRMFSYSISYLFFLFASIILCSIDLF</sequence>
<reference key="1">
    <citation type="journal article" date="2005" name="PLoS Biol.">
        <title>The Wolbachia genome of Brugia malayi: endosymbiont evolution within a human pathogenic nematode.</title>
        <authorList>
            <person name="Foster J."/>
            <person name="Ganatra M."/>
            <person name="Kamal I."/>
            <person name="Ware J."/>
            <person name="Makarova K."/>
            <person name="Ivanova N."/>
            <person name="Bhattacharyya A."/>
            <person name="Kapatral V."/>
            <person name="Kumar S."/>
            <person name="Posfai J."/>
            <person name="Vincze T."/>
            <person name="Ingram J."/>
            <person name="Moran L."/>
            <person name="Lapidus A."/>
            <person name="Omelchenko M."/>
            <person name="Kyrpides N."/>
            <person name="Ghedin E."/>
            <person name="Wang S."/>
            <person name="Goltsman E."/>
            <person name="Joukov V."/>
            <person name="Ostrovskaya O."/>
            <person name="Tsukerman K."/>
            <person name="Mazur M."/>
            <person name="Comb D."/>
            <person name="Koonin E."/>
            <person name="Slatko B."/>
        </authorList>
    </citation>
    <scope>NUCLEOTIDE SEQUENCE [LARGE SCALE GENOMIC DNA]</scope>
    <source>
        <strain>TRS</strain>
    </source>
</reference>
<comment type="function">
    <text evidence="1">Converts heme B (protoheme IX) to heme O by substitution of the vinyl group on carbon 2 of heme B porphyrin ring with a hydroxyethyl farnesyl side group.</text>
</comment>
<comment type="catalytic activity">
    <reaction evidence="1">
        <text>heme b + (2E,6E)-farnesyl diphosphate + H2O = Fe(II)-heme o + diphosphate</text>
        <dbReference type="Rhea" id="RHEA:28070"/>
        <dbReference type="ChEBI" id="CHEBI:15377"/>
        <dbReference type="ChEBI" id="CHEBI:33019"/>
        <dbReference type="ChEBI" id="CHEBI:60344"/>
        <dbReference type="ChEBI" id="CHEBI:60530"/>
        <dbReference type="ChEBI" id="CHEBI:175763"/>
        <dbReference type="EC" id="2.5.1.141"/>
    </reaction>
</comment>
<comment type="pathway">
    <text evidence="1">Porphyrin-containing compound metabolism; heme O biosynthesis; heme O from protoheme: step 1/1.</text>
</comment>
<comment type="subcellular location">
    <subcellularLocation>
        <location evidence="1">Cell membrane</location>
        <topology evidence="1">Multi-pass membrane protein</topology>
    </subcellularLocation>
</comment>
<comment type="miscellaneous">
    <text evidence="1">Carbon 2 of the heme B porphyrin ring is defined according to the Fischer nomenclature.</text>
</comment>
<comment type="similarity">
    <text evidence="1">Belongs to the UbiA prenyltransferase family. Protoheme IX farnesyltransferase subfamily.</text>
</comment>
<feature type="chain" id="PRO_0000327190" description="Protoheme IX farnesyltransferase">
    <location>
        <begin position="1"/>
        <end position="295"/>
    </location>
</feature>
<feature type="transmembrane region" description="Helical" evidence="1">
    <location>
        <begin position="24"/>
        <end position="43"/>
    </location>
</feature>
<feature type="transmembrane region" description="Helical" evidence="1">
    <location>
        <begin position="47"/>
        <end position="69"/>
    </location>
</feature>
<feature type="transmembrane region" description="Helical" evidence="1">
    <location>
        <begin position="94"/>
        <end position="114"/>
    </location>
</feature>
<feature type="transmembrane region" description="Helical" evidence="1">
    <location>
        <begin position="117"/>
        <end position="137"/>
    </location>
</feature>
<feature type="transmembrane region" description="Helical" evidence="1">
    <location>
        <begin position="144"/>
        <end position="164"/>
    </location>
</feature>
<feature type="transmembrane region" description="Helical" evidence="1">
    <location>
        <begin position="171"/>
        <end position="191"/>
    </location>
</feature>
<feature type="transmembrane region" description="Helical" evidence="1">
    <location>
        <begin position="216"/>
        <end position="236"/>
    </location>
</feature>
<feature type="transmembrane region" description="Helical" evidence="1">
    <location>
        <begin position="241"/>
        <end position="261"/>
    </location>
</feature>
<feature type="transmembrane region" description="Helical" evidence="1">
    <location>
        <begin position="272"/>
        <end position="292"/>
    </location>
</feature>
<evidence type="ECO:0000255" key="1">
    <source>
        <dbReference type="HAMAP-Rule" id="MF_00154"/>
    </source>
</evidence>
<accession>Q5GSX9</accession>
<organism>
    <name type="scientific">Wolbachia sp. subsp. Brugia malayi (strain TRS)</name>
    <dbReference type="NCBI Taxonomy" id="292805"/>
    <lineage>
        <taxon>Bacteria</taxon>
        <taxon>Pseudomonadati</taxon>
        <taxon>Pseudomonadota</taxon>
        <taxon>Alphaproteobacteria</taxon>
        <taxon>Rickettsiales</taxon>
        <taxon>Anaplasmataceae</taxon>
        <taxon>Wolbachieae</taxon>
        <taxon>Wolbachia</taxon>
    </lineage>
</organism>
<proteinExistence type="inferred from homology"/>
<protein>
    <recommendedName>
        <fullName evidence="1">Protoheme IX farnesyltransferase</fullName>
        <ecNumber evidence="1">2.5.1.141</ecNumber>
    </recommendedName>
    <alternativeName>
        <fullName evidence="1">Heme B farnesyltransferase</fullName>
    </alternativeName>
    <alternativeName>
        <fullName evidence="1">Heme O synthase</fullName>
    </alternativeName>
</protein>